<protein>
    <recommendedName>
        <fullName evidence="1">UPF0299 membrane protein YohJ</fullName>
    </recommendedName>
</protein>
<name>YOHJ_ECOSM</name>
<dbReference type="EMBL" id="CP000970">
    <property type="protein sequence ID" value="ACB17258.1"/>
    <property type="molecule type" value="Genomic_DNA"/>
</dbReference>
<dbReference type="RefSeq" id="WP_001295452.1">
    <property type="nucleotide sequence ID" value="NC_010498.1"/>
</dbReference>
<dbReference type="SMR" id="B1LKN8"/>
<dbReference type="KEGG" id="ecm:EcSMS35_2288"/>
<dbReference type="HOGENOM" id="CLU_113736_1_1_6"/>
<dbReference type="Proteomes" id="UP000007011">
    <property type="component" value="Chromosome"/>
</dbReference>
<dbReference type="GO" id="GO:0005886">
    <property type="term" value="C:plasma membrane"/>
    <property type="evidence" value="ECO:0007669"/>
    <property type="project" value="UniProtKB-SubCell"/>
</dbReference>
<dbReference type="HAMAP" id="MF_01144">
    <property type="entry name" value="UPF0299"/>
    <property type="match status" value="1"/>
</dbReference>
<dbReference type="InterPro" id="IPR005538">
    <property type="entry name" value="LrgA/CidA"/>
</dbReference>
<dbReference type="InterPro" id="IPR022957">
    <property type="entry name" value="Uncharacterised_UPF0299"/>
</dbReference>
<dbReference type="NCBIfam" id="NF002494">
    <property type="entry name" value="PRK01821.1"/>
    <property type="match status" value="1"/>
</dbReference>
<dbReference type="PANTHER" id="PTHR33931">
    <property type="entry name" value="HOLIN-LIKE PROTEIN CIDA-RELATED"/>
    <property type="match status" value="1"/>
</dbReference>
<dbReference type="PANTHER" id="PTHR33931:SF5">
    <property type="entry name" value="UPF0299 MEMBRANE PROTEIN YOHJ"/>
    <property type="match status" value="1"/>
</dbReference>
<dbReference type="Pfam" id="PF03788">
    <property type="entry name" value="LrgA"/>
    <property type="match status" value="1"/>
</dbReference>
<sequence length="132" mass="14579">MSKTLNIIWQYLRAFVLIYACLYAGIFIASLLPVTIPGSIIGMLILFVLLALQILPAKWVNPGCYVLIRYMALLFVPIGVGVMQYFDLLRAQFGPVVVSCAVSTLVVFLVVSWSSQLVHGERKVVGQKGSEE</sequence>
<accession>B1LKN8</accession>
<feature type="chain" id="PRO_1000137362" description="UPF0299 membrane protein YohJ">
    <location>
        <begin position="1"/>
        <end position="132"/>
    </location>
</feature>
<feature type="transmembrane region" description="Helical" evidence="1">
    <location>
        <begin position="7"/>
        <end position="27"/>
    </location>
</feature>
<feature type="transmembrane region" description="Helical" evidence="1">
    <location>
        <begin position="31"/>
        <end position="51"/>
    </location>
</feature>
<feature type="transmembrane region" description="Helical" evidence="1">
    <location>
        <begin position="63"/>
        <end position="83"/>
    </location>
</feature>
<feature type="transmembrane region" description="Helical" evidence="1">
    <location>
        <begin position="93"/>
        <end position="113"/>
    </location>
</feature>
<evidence type="ECO:0000255" key="1">
    <source>
        <dbReference type="HAMAP-Rule" id="MF_01144"/>
    </source>
</evidence>
<keyword id="KW-0997">Cell inner membrane</keyword>
<keyword id="KW-1003">Cell membrane</keyword>
<keyword id="KW-0472">Membrane</keyword>
<keyword id="KW-0812">Transmembrane</keyword>
<keyword id="KW-1133">Transmembrane helix</keyword>
<proteinExistence type="inferred from homology"/>
<organism>
    <name type="scientific">Escherichia coli (strain SMS-3-5 / SECEC)</name>
    <dbReference type="NCBI Taxonomy" id="439855"/>
    <lineage>
        <taxon>Bacteria</taxon>
        <taxon>Pseudomonadati</taxon>
        <taxon>Pseudomonadota</taxon>
        <taxon>Gammaproteobacteria</taxon>
        <taxon>Enterobacterales</taxon>
        <taxon>Enterobacteriaceae</taxon>
        <taxon>Escherichia</taxon>
    </lineage>
</organism>
<comment type="subcellular location">
    <subcellularLocation>
        <location evidence="1">Cell inner membrane</location>
        <topology evidence="1">Multi-pass membrane protein</topology>
    </subcellularLocation>
</comment>
<comment type="similarity">
    <text evidence="1">Belongs to the UPF0299 family.</text>
</comment>
<gene>
    <name evidence="1" type="primary">yohJ</name>
    <name type="ordered locus">EcSMS35_2288</name>
</gene>
<reference key="1">
    <citation type="journal article" date="2008" name="J. Bacteriol.">
        <title>Insights into the environmental resistance gene pool from the genome sequence of the multidrug-resistant environmental isolate Escherichia coli SMS-3-5.</title>
        <authorList>
            <person name="Fricke W.F."/>
            <person name="Wright M.S."/>
            <person name="Lindell A.H."/>
            <person name="Harkins D.M."/>
            <person name="Baker-Austin C."/>
            <person name="Ravel J."/>
            <person name="Stepanauskas R."/>
        </authorList>
    </citation>
    <scope>NUCLEOTIDE SEQUENCE [LARGE SCALE GENOMIC DNA]</scope>
    <source>
        <strain>SMS-3-5 / SECEC</strain>
    </source>
</reference>